<proteinExistence type="inferred from homology"/>
<feature type="signal peptide" evidence="2">
    <location>
        <begin position="1"/>
        <end position="19"/>
    </location>
</feature>
<feature type="propeptide" id="PRO_0000404954" evidence="1">
    <location>
        <begin position="20"/>
        <end position="50"/>
    </location>
</feature>
<feature type="peptide" id="PRO_0000404955" description="Conotoxin Vn5.3">
    <location>
        <begin position="51"/>
        <end position="60"/>
    </location>
</feature>
<protein>
    <recommendedName>
        <fullName evidence="3">Conotoxin Vn5.3</fullName>
    </recommendedName>
    <alternativeName>
        <fullName evidence="5">Conotoxin VnMRCL-021</fullName>
    </alternativeName>
</protein>
<comment type="subcellular location">
    <subcellularLocation>
        <location evidence="4">Secreted</location>
    </subcellularLocation>
</comment>
<comment type="tissue specificity">
    <text evidence="4">Expressed by the venom duct.</text>
</comment>
<comment type="domain">
    <text evidence="3">The cysteine framework is V (CC-CC).</text>
</comment>
<comment type="PTM">
    <text evidence="3">Contains 2 disulfide bonds that can be either 'C1-C3, C2-C4' or 'C1-C4, C2-C3', since these disulfide connectivities have been observed for conotoxins with cysteine framework V (for examples, see AC P0DQQ7 and AC P81755).</text>
</comment>
<comment type="similarity">
    <text evidence="3">Belongs to the conotoxin T superfamily.</text>
</comment>
<name>CT53A_CONVE</name>
<sequence length="61" mass="6969">MRCLPVFVILLLLIASAPGVDVQPKTKYYVPRASRRDFAKKTPKRLSKLRGCCPRSFLCCR</sequence>
<evidence type="ECO:0000250" key="1"/>
<evidence type="ECO:0000255" key="2"/>
<evidence type="ECO:0000305" key="3"/>
<evidence type="ECO:0000305" key="4">
    <source>
    </source>
</evidence>
<evidence type="ECO:0000312" key="5">
    <source>
        <dbReference type="EMBL" id="AAG60395.1"/>
    </source>
</evidence>
<organism>
    <name type="scientific">Conus ventricosus</name>
    <name type="common">Mediterranean cone</name>
    <dbReference type="NCBI Taxonomy" id="117992"/>
    <lineage>
        <taxon>Eukaryota</taxon>
        <taxon>Metazoa</taxon>
        <taxon>Spiralia</taxon>
        <taxon>Lophotrochozoa</taxon>
        <taxon>Mollusca</taxon>
        <taxon>Gastropoda</taxon>
        <taxon>Caenogastropoda</taxon>
        <taxon>Neogastropoda</taxon>
        <taxon>Conoidea</taxon>
        <taxon>Conidae</taxon>
        <taxon>Conus</taxon>
        <taxon>Lautoconus</taxon>
    </lineage>
</organism>
<reference key="1">
    <citation type="journal article" date="2001" name="Mol. Biol. Evol.">
        <title>Mechanisms for evolving hypervariability: the case of conopeptides.</title>
        <authorList>
            <person name="Conticello S.G."/>
            <person name="Gilad Y."/>
            <person name="Avidan N."/>
            <person name="Ben-Asher E."/>
            <person name="Levy Z."/>
            <person name="Fainzilber M."/>
        </authorList>
    </citation>
    <scope>NUCLEOTIDE SEQUENCE [MRNA]</scope>
    <source>
        <tissue>Venom duct</tissue>
    </source>
</reference>
<accession>Q9BPG2</accession>
<keyword id="KW-1015">Disulfide bond</keyword>
<keyword id="KW-0528">Neurotoxin</keyword>
<keyword id="KW-0964">Secreted</keyword>
<keyword id="KW-0732">Signal</keyword>
<keyword id="KW-0800">Toxin</keyword>
<dbReference type="EMBL" id="AF214967">
    <property type="protein sequence ID" value="AAG60395.1"/>
    <property type="molecule type" value="mRNA"/>
</dbReference>
<dbReference type="ConoServer" id="654">
    <property type="toxin name" value="Vn5.3 precursor"/>
</dbReference>
<dbReference type="GO" id="GO:0005576">
    <property type="term" value="C:extracellular region"/>
    <property type="evidence" value="ECO:0007669"/>
    <property type="project" value="UniProtKB-SubCell"/>
</dbReference>
<dbReference type="GO" id="GO:0090729">
    <property type="term" value="F:toxin activity"/>
    <property type="evidence" value="ECO:0007669"/>
    <property type="project" value="UniProtKB-KW"/>
</dbReference>
<dbReference type="InterPro" id="IPR031565">
    <property type="entry name" value="T-conotoxin"/>
</dbReference>
<dbReference type="Pfam" id="PF16981">
    <property type="entry name" value="Chi-conotoxin"/>
    <property type="match status" value="1"/>
</dbReference>